<reference key="1">
    <citation type="journal article" date="2003" name="Nature">
        <title>The genome sequence of Bacillus anthracis Ames and comparison to closely related bacteria.</title>
        <authorList>
            <person name="Read T.D."/>
            <person name="Peterson S.N."/>
            <person name="Tourasse N.J."/>
            <person name="Baillie L.W."/>
            <person name="Paulsen I.T."/>
            <person name="Nelson K.E."/>
            <person name="Tettelin H."/>
            <person name="Fouts D.E."/>
            <person name="Eisen J.A."/>
            <person name="Gill S.R."/>
            <person name="Holtzapple E.K."/>
            <person name="Okstad O.A."/>
            <person name="Helgason E."/>
            <person name="Rilstone J."/>
            <person name="Wu M."/>
            <person name="Kolonay J.F."/>
            <person name="Beanan M.J."/>
            <person name="Dodson R.J."/>
            <person name="Brinkac L.M."/>
            <person name="Gwinn M.L."/>
            <person name="DeBoy R.T."/>
            <person name="Madpu R."/>
            <person name="Daugherty S.C."/>
            <person name="Durkin A.S."/>
            <person name="Haft D.H."/>
            <person name="Nelson W.C."/>
            <person name="Peterson J.D."/>
            <person name="Pop M."/>
            <person name="Khouri H.M."/>
            <person name="Radune D."/>
            <person name="Benton J.L."/>
            <person name="Mahamoud Y."/>
            <person name="Jiang L."/>
            <person name="Hance I.R."/>
            <person name="Weidman J.F."/>
            <person name="Berry K.J."/>
            <person name="Plaut R.D."/>
            <person name="Wolf A.M."/>
            <person name="Watkins K.L."/>
            <person name="Nierman W.C."/>
            <person name="Hazen A."/>
            <person name="Cline R.T."/>
            <person name="Redmond C."/>
            <person name="Thwaite J.E."/>
            <person name="White O."/>
            <person name="Salzberg S.L."/>
            <person name="Thomason B."/>
            <person name="Friedlander A.M."/>
            <person name="Koehler T.M."/>
            <person name="Hanna P.C."/>
            <person name="Kolstoe A.-B."/>
            <person name="Fraser C.M."/>
        </authorList>
    </citation>
    <scope>NUCLEOTIDE SEQUENCE [LARGE SCALE GENOMIC DNA]</scope>
    <source>
        <strain>Ames / isolate Porton</strain>
    </source>
</reference>
<reference key="2">
    <citation type="journal article" date="2009" name="J. Bacteriol.">
        <title>The complete genome sequence of Bacillus anthracis Ames 'Ancestor'.</title>
        <authorList>
            <person name="Ravel J."/>
            <person name="Jiang L."/>
            <person name="Stanley S.T."/>
            <person name="Wilson M.R."/>
            <person name="Decker R.S."/>
            <person name="Read T.D."/>
            <person name="Worsham P."/>
            <person name="Keim P.S."/>
            <person name="Salzberg S.L."/>
            <person name="Fraser-Liggett C.M."/>
            <person name="Rasko D.A."/>
        </authorList>
    </citation>
    <scope>NUCLEOTIDE SEQUENCE [LARGE SCALE GENOMIC DNA]</scope>
    <source>
        <strain>Ames ancestor</strain>
    </source>
</reference>
<reference key="3">
    <citation type="submission" date="2004-01" db="EMBL/GenBank/DDBJ databases">
        <title>Complete genome sequence of Bacillus anthracis Sterne.</title>
        <authorList>
            <person name="Brettin T.S."/>
            <person name="Bruce D."/>
            <person name="Challacombe J.F."/>
            <person name="Gilna P."/>
            <person name="Han C."/>
            <person name="Hill K."/>
            <person name="Hitchcock P."/>
            <person name="Jackson P."/>
            <person name="Keim P."/>
            <person name="Longmire J."/>
            <person name="Lucas S."/>
            <person name="Okinaka R."/>
            <person name="Richardson P."/>
            <person name="Rubin E."/>
            <person name="Tice H."/>
        </authorList>
    </citation>
    <scope>NUCLEOTIDE SEQUENCE [LARGE SCALE GENOMIC DNA]</scope>
    <source>
        <strain>Sterne</strain>
    </source>
</reference>
<protein>
    <recommendedName>
        <fullName evidence="1">Histidine ammonia-lyase</fullName>
        <shortName evidence="1">Histidase</shortName>
        <ecNumber evidence="1">4.3.1.3</ecNumber>
    </recommendedName>
</protein>
<evidence type="ECO:0000255" key="1">
    <source>
        <dbReference type="HAMAP-Rule" id="MF_00229"/>
    </source>
</evidence>
<dbReference type="EC" id="4.3.1.3" evidence="1"/>
<dbReference type="EMBL" id="AE016879">
    <property type="protein sequence ID" value="AAP27461.1"/>
    <property type="molecule type" value="Genomic_DNA"/>
</dbReference>
<dbReference type="EMBL" id="AE017334">
    <property type="protein sequence ID" value="AAT32820.1"/>
    <property type="molecule type" value="Genomic_DNA"/>
</dbReference>
<dbReference type="EMBL" id="AE017225">
    <property type="protein sequence ID" value="AAT55749.1"/>
    <property type="molecule type" value="Genomic_DNA"/>
</dbReference>
<dbReference type="RefSeq" id="NP_845975.1">
    <property type="nucleotide sequence ID" value="NC_003997.3"/>
</dbReference>
<dbReference type="RefSeq" id="WP_000631851.1">
    <property type="nucleotide sequence ID" value="NZ_WXXJ01000029.1"/>
</dbReference>
<dbReference type="RefSeq" id="YP_029698.1">
    <property type="nucleotide sequence ID" value="NC_005945.1"/>
</dbReference>
<dbReference type="SMR" id="Q81Y45"/>
<dbReference type="STRING" id="261594.GBAA_3712"/>
<dbReference type="DNASU" id="1086204"/>
<dbReference type="GeneID" id="45023433"/>
<dbReference type="KEGG" id="ban:BA_3712"/>
<dbReference type="KEGG" id="bar:GBAA_3712"/>
<dbReference type="KEGG" id="bat:BAS3442"/>
<dbReference type="PATRIC" id="fig|198094.11.peg.3683"/>
<dbReference type="eggNOG" id="COG2986">
    <property type="taxonomic scope" value="Bacteria"/>
</dbReference>
<dbReference type="HOGENOM" id="CLU_014801_4_0_9"/>
<dbReference type="OMA" id="YSLRCMP"/>
<dbReference type="OrthoDB" id="9806955at2"/>
<dbReference type="UniPathway" id="UPA00379">
    <property type="reaction ID" value="UER00549"/>
</dbReference>
<dbReference type="Proteomes" id="UP000000427">
    <property type="component" value="Chromosome"/>
</dbReference>
<dbReference type="Proteomes" id="UP000000594">
    <property type="component" value="Chromosome"/>
</dbReference>
<dbReference type="GO" id="GO:0005737">
    <property type="term" value="C:cytoplasm"/>
    <property type="evidence" value="ECO:0007669"/>
    <property type="project" value="UniProtKB-SubCell"/>
</dbReference>
<dbReference type="GO" id="GO:0004397">
    <property type="term" value="F:histidine ammonia-lyase activity"/>
    <property type="evidence" value="ECO:0007669"/>
    <property type="project" value="UniProtKB-UniRule"/>
</dbReference>
<dbReference type="GO" id="GO:0019556">
    <property type="term" value="P:L-histidine catabolic process to glutamate and formamide"/>
    <property type="evidence" value="ECO:0007669"/>
    <property type="project" value="UniProtKB-UniPathway"/>
</dbReference>
<dbReference type="GO" id="GO:0019557">
    <property type="term" value="P:L-histidine catabolic process to glutamate and formate"/>
    <property type="evidence" value="ECO:0007669"/>
    <property type="project" value="UniProtKB-UniPathway"/>
</dbReference>
<dbReference type="CDD" id="cd00332">
    <property type="entry name" value="PAL-HAL"/>
    <property type="match status" value="1"/>
</dbReference>
<dbReference type="FunFam" id="1.10.275.10:FF:000008">
    <property type="entry name" value="Histidine ammonia-lyase"/>
    <property type="match status" value="1"/>
</dbReference>
<dbReference type="FunFam" id="1.20.200.10:FF:000003">
    <property type="entry name" value="Histidine ammonia-lyase"/>
    <property type="match status" value="1"/>
</dbReference>
<dbReference type="Gene3D" id="1.20.200.10">
    <property type="entry name" value="Fumarase/aspartase (Central domain)"/>
    <property type="match status" value="1"/>
</dbReference>
<dbReference type="Gene3D" id="1.10.275.10">
    <property type="entry name" value="Fumarase/aspartase (N-terminal domain)"/>
    <property type="match status" value="1"/>
</dbReference>
<dbReference type="HAMAP" id="MF_00229">
    <property type="entry name" value="His_ammonia_lyase"/>
    <property type="match status" value="1"/>
</dbReference>
<dbReference type="InterPro" id="IPR001106">
    <property type="entry name" value="Aromatic_Lyase"/>
</dbReference>
<dbReference type="InterPro" id="IPR024083">
    <property type="entry name" value="Fumarase/histidase_N"/>
</dbReference>
<dbReference type="InterPro" id="IPR005921">
    <property type="entry name" value="HutH"/>
</dbReference>
<dbReference type="InterPro" id="IPR008948">
    <property type="entry name" value="L-Aspartase-like"/>
</dbReference>
<dbReference type="InterPro" id="IPR022313">
    <property type="entry name" value="Phe/His_NH3-lyase_AS"/>
</dbReference>
<dbReference type="NCBIfam" id="TIGR01225">
    <property type="entry name" value="hutH"/>
    <property type="match status" value="1"/>
</dbReference>
<dbReference type="NCBIfam" id="NF006871">
    <property type="entry name" value="PRK09367.1"/>
    <property type="match status" value="1"/>
</dbReference>
<dbReference type="PANTHER" id="PTHR10362">
    <property type="entry name" value="HISTIDINE AMMONIA-LYASE"/>
    <property type="match status" value="1"/>
</dbReference>
<dbReference type="Pfam" id="PF00221">
    <property type="entry name" value="Lyase_aromatic"/>
    <property type="match status" value="1"/>
</dbReference>
<dbReference type="SUPFAM" id="SSF48557">
    <property type="entry name" value="L-aspartase-like"/>
    <property type="match status" value="1"/>
</dbReference>
<dbReference type="PROSITE" id="PS00488">
    <property type="entry name" value="PAL_HISTIDASE"/>
    <property type="match status" value="1"/>
</dbReference>
<comment type="catalytic activity">
    <reaction evidence="1">
        <text>L-histidine = trans-urocanate + NH4(+)</text>
        <dbReference type="Rhea" id="RHEA:21232"/>
        <dbReference type="ChEBI" id="CHEBI:17771"/>
        <dbReference type="ChEBI" id="CHEBI:28938"/>
        <dbReference type="ChEBI" id="CHEBI:57595"/>
        <dbReference type="EC" id="4.3.1.3"/>
    </reaction>
</comment>
<comment type="pathway">
    <text evidence="1">Amino-acid degradation; L-histidine degradation into L-glutamate; N-formimidoyl-L-glutamate from L-histidine: step 1/3.</text>
</comment>
<comment type="subcellular location">
    <subcellularLocation>
        <location evidence="1">Cytoplasm</location>
    </subcellularLocation>
</comment>
<comment type="PTM">
    <text evidence="1">Contains an active site 4-methylidene-imidazol-5-one (MIO), which is formed autocatalytically by cyclization and dehydration of residues Ala-Ser-Gly.</text>
</comment>
<comment type="similarity">
    <text evidence="1">Belongs to the PAL/histidase family.</text>
</comment>
<feature type="chain" id="PRO_0000160985" description="Histidine ammonia-lyase">
    <location>
        <begin position="1"/>
        <end position="505"/>
    </location>
</feature>
<feature type="modified residue" description="2,3-didehydroalanine (Ser)" evidence="1">
    <location>
        <position position="142"/>
    </location>
</feature>
<feature type="cross-link" description="5-imidazolinone (Ala-Gly)" evidence="1">
    <location>
        <begin position="141"/>
        <end position="143"/>
    </location>
</feature>
<keyword id="KW-0963">Cytoplasm</keyword>
<keyword id="KW-0369">Histidine metabolism</keyword>
<keyword id="KW-0456">Lyase</keyword>
<keyword id="KW-1185">Reference proteome</keyword>
<proteinExistence type="inferred from homology"/>
<gene>
    <name evidence="1" type="primary">hutH</name>
    <name type="ordered locus">BA_3712</name>
    <name type="ordered locus">GBAA_3712</name>
    <name type="ordered locus">BAS3442</name>
</gene>
<name>HUTH_BACAN</name>
<sequence length="505" mass="55413">MITLTGHTLTIEEMKRLLLEGEGVTACPTSMQKVAECREVVEKIVENGKVVYGITTGFGKFSDVLIQKDDVKALQHNLIQSHACGIGDPFPEEVSRGMLILRANTMLKGVSGVRPLVVNMLLEFVNRKIHPVVPQQGSLGASGDLAPLSHLALILLGEGEVFYKGKRVHAMVALTEEGLEPIELEAKEGLALINGTQAMTAQGVLSYIEAEATAYQAELIASMTIEGLQGIIDAFDENVHKARGYKEQVEVASRIRDILHDSKLTTKQGELRVQDAYSLRCIPQVHGASWQVLNYVKEKLEIEMNAATDNPLIFDGGEKVISGGNFHGQPIAFAMDFLKVGMAELANISERRIERLVNPQLNDLPPFLSPEPGLQSGAMIMQYAAASLVSENKTLAHPASVDSIPSSANQEDHVSMGTIASRHAHQIIQNVRRVLSIEMICAMQAAEYRGIENMSTVTKSFYHQGRQQVPSITNDRIFSTDIENITHWLKTNYSIKERLDVNAAL</sequence>
<organism>
    <name type="scientific">Bacillus anthracis</name>
    <dbReference type="NCBI Taxonomy" id="1392"/>
    <lineage>
        <taxon>Bacteria</taxon>
        <taxon>Bacillati</taxon>
        <taxon>Bacillota</taxon>
        <taxon>Bacilli</taxon>
        <taxon>Bacillales</taxon>
        <taxon>Bacillaceae</taxon>
        <taxon>Bacillus</taxon>
        <taxon>Bacillus cereus group</taxon>
    </lineage>
</organism>
<accession>Q81Y45</accession>
<accession>Q6HVE0</accession>
<accession>Q6KPK9</accession>